<organism>
    <name type="scientific">Saccharomyces cerevisiae (strain ATCC 204508 / S288c)</name>
    <name type="common">Baker's yeast</name>
    <dbReference type="NCBI Taxonomy" id="559292"/>
    <lineage>
        <taxon>Eukaryota</taxon>
        <taxon>Fungi</taxon>
        <taxon>Dikarya</taxon>
        <taxon>Ascomycota</taxon>
        <taxon>Saccharomycotina</taxon>
        <taxon>Saccharomycetes</taxon>
        <taxon>Saccharomycetales</taxon>
        <taxon>Saccharomycetaceae</taxon>
        <taxon>Saccharomyces</taxon>
    </lineage>
</organism>
<name>ART5_YEAST</name>
<protein>
    <recommendedName>
        <fullName>Arrestin-related trafficking adapter 5</fullName>
    </recommendedName>
</protein>
<sequence>MFSLSSLSSSGGHSEQKERERISYFDIRINSPYKDIILIQGSPLELSSIPLSGNLVISVKNEIVVKKISLRLVGRFKLEFLQVGRYKKNSSSLASLVKEKRKIFECYWDNLLVSSKGDVLVGGENAENQHNSSSGRSTSNQDMDTSGNAIFLSKRSLSSPVFNKIIRRKTHSSHRKILELPENGVTGTPFEGLRENARSRSSSSNTLNNNSHSYSNRDGSGSSYLFLMKRGNYELPFNTMLPPEVCETIEGLQSGSILYSFEAIIDGRQLWDTDLSVHTSPHGPIGSTSTSGNGMRTKNKIIIKKFKYLRILRTLSMDNLAMQEEISVGNTWRDKLQYETSIPSRAVPIGSTTPVKIKIFPFEKNIRLDRIEMALIQYYAMKDSSAQIYDDEIAVMKITHLADFGPLTDKLDVDCPFTIPDNLKQITQDCCLQDNLIRVMHKLQVRILLQRQVDGEYKNLEIKAQLPMLLFISPHLPMKGRLVLFDKHDGKIHFRPGELVPLFLTTYPAQGLTPGVELNSTTTAHLALPQPPPNYHESTNDHLMPALQPLGADSVVLTVPSYEQAQAQASASSYVTGSVPAYCDDD</sequence>
<gene>
    <name type="primary">ART5</name>
    <name type="ordered locus">YGR068C</name>
</gene>
<comment type="function">
    <text evidence="5">May regulate endocytosis by recruiting RSP5 ubiquitin ligase activity to specific plasma membrane proteins in response to extracellular stimuli.</text>
</comment>
<comment type="subunit">
    <text evidence="3 5">Interacts with RSP5.</text>
</comment>
<comment type="interaction">
    <interactant intactId="EBI-23201">
        <id>P53244</id>
    </interactant>
    <interactant intactId="EBI-16219">
        <id>P39940</id>
        <label>RSP5</label>
    </interactant>
    <organismsDiffer>false</organismsDiffer>
    <experiments>4</experiments>
</comment>
<comment type="PTM">
    <text evidence="3 4">Ubiquitinated by RSP5.</text>
</comment>
<comment type="miscellaneous">
    <text evidence="2">Present with 1970 molecules/cell in log phase SD medium.</text>
</comment>
<comment type="similarity">
    <text evidence="6">Belongs to the arrestin family.</text>
</comment>
<feature type="chain" id="PRO_0000202804" description="Arrestin-related trafficking adapter 5">
    <location>
        <begin position="1"/>
        <end position="586"/>
    </location>
</feature>
<feature type="region of interest" description="Disordered" evidence="1">
    <location>
        <begin position="123"/>
        <end position="145"/>
    </location>
</feature>
<feature type="region of interest" description="Disordered" evidence="1">
    <location>
        <begin position="182"/>
        <end position="217"/>
    </location>
</feature>
<feature type="compositionally biased region" description="Polar residues" evidence="1">
    <location>
        <begin position="126"/>
        <end position="145"/>
    </location>
</feature>
<feature type="compositionally biased region" description="Low complexity" evidence="1">
    <location>
        <begin position="199"/>
        <end position="216"/>
    </location>
</feature>
<feature type="cross-link" description="Glycyl lysine isopeptide (Lys-Gly) (interchain with G-Cter in ubiquitin)" evidence="7">
    <location>
        <position position="364"/>
    </location>
</feature>
<keyword id="KW-0254">Endocytosis</keyword>
<keyword id="KW-1017">Isopeptide bond</keyword>
<keyword id="KW-1185">Reference proteome</keyword>
<keyword id="KW-0832">Ubl conjugation</keyword>
<accession>P53244</accession>
<accession>D6VUK2</accession>
<proteinExistence type="evidence at protein level"/>
<evidence type="ECO:0000256" key="1">
    <source>
        <dbReference type="SAM" id="MobiDB-lite"/>
    </source>
</evidence>
<evidence type="ECO:0000269" key="2">
    <source>
    </source>
</evidence>
<evidence type="ECO:0000269" key="3">
    <source>
    </source>
</evidence>
<evidence type="ECO:0000269" key="4">
    <source>
    </source>
</evidence>
<evidence type="ECO:0000269" key="5">
    <source>
    </source>
</evidence>
<evidence type="ECO:0000305" key="6"/>
<evidence type="ECO:0007744" key="7">
    <source>
    </source>
</evidence>
<dbReference type="EMBL" id="Z72853">
    <property type="protein sequence ID" value="CAA97070.1"/>
    <property type="molecule type" value="Genomic_DNA"/>
</dbReference>
<dbReference type="EMBL" id="BK006941">
    <property type="protein sequence ID" value="DAA08163.1"/>
    <property type="molecule type" value="Genomic_DNA"/>
</dbReference>
<dbReference type="PIR" id="S64363">
    <property type="entry name" value="S64363"/>
</dbReference>
<dbReference type="RefSeq" id="NP_011582.1">
    <property type="nucleotide sequence ID" value="NM_001181197.1"/>
</dbReference>
<dbReference type="BioGRID" id="33312">
    <property type="interactions" value="110"/>
</dbReference>
<dbReference type="DIP" id="DIP-1864N"/>
<dbReference type="FunCoup" id="P53244">
    <property type="interactions" value="92"/>
</dbReference>
<dbReference type="IntAct" id="P53244">
    <property type="interactions" value="23"/>
</dbReference>
<dbReference type="MINT" id="P53244"/>
<dbReference type="STRING" id="4932.YGR068C"/>
<dbReference type="iPTMnet" id="P53244"/>
<dbReference type="PaxDb" id="4932-YGR068C"/>
<dbReference type="PeptideAtlas" id="P53244"/>
<dbReference type="EnsemblFungi" id="YGR068C_mRNA">
    <property type="protein sequence ID" value="YGR068C"/>
    <property type="gene ID" value="YGR068C"/>
</dbReference>
<dbReference type="GeneID" id="852960"/>
<dbReference type="KEGG" id="sce:YGR068C"/>
<dbReference type="AGR" id="SGD:S000003300"/>
<dbReference type="SGD" id="S000003300">
    <property type="gene designation" value="ART5"/>
</dbReference>
<dbReference type="VEuPathDB" id="FungiDB:YGR068C"/>
<dbReference type="eggNOG" id="KOG3780">
    <property type="taxonomic scope" value="Eukaryota"/>
</dbReference>
<dbReference type="HOGENOM" id="CLU_018982_3_0_1"/>
<dbReference type="InParanoid" id="P53244"/>
<dbReference type="OMA" id="KGNYNLP"/>
<dbReference type="OrthoDB" id="2333384at2759"/>
<dbReference type="BioCyc" id="YEAST:G3O-30782-MONOMER"/>
<dbReference type="Reactome" id="R-SCE-844456">
    <property type="pathway name" value="The NLRP3 inflammasome"/>
</dbReference>
<dbReference type="BioGRID-ORCS" id="852960">
    <property type="hits" value="0 hits in 10 CRISPR screens"/>
</dbReference>
<dbReference type="PRO" id="PR:P53244"/>
<dbReference type="Proteomes" id="UP000002311">
    <property type="component" value="Chromosome VII"/>
</dbReference>
<dbReference type="RNAct" id="P53244">
    <property type="molecule type" value="protein"/>
</dbReference>
<dbReference type="GO" id="GO:0005737">
    <property type="term" value="C:cytoplasm"/>
    <property type="evidence" value="ECO:0000318"/>
    <property type="project" value="GO_Central"/>
</dbReference>
<dbReference type="GO" id="GO:0005829">
    <property type="term" value="C:cytosol"/>
    <property type="evidence" value="ECO:0007005"/>
    <property type="project" value="SGD"/>
</dbReference>
<dbReference type="GO" id="GO:0005886">
    <property type="term" value="C:plasma membrane"/>
    <property type="evidence" value="ECO:0000318"/>
    <property type="project" value="GO_Central"/>
</dbReference>
<dbReference type="GO" id="GO:0030674">
    <property type="term" value="F:protein-macromolecule adaptor activity"/>
    <property type="evidence" value="ECO:0000318"/>
    <property type="project" value="GO_Central"/>
</dbReference>
<dbReference type="GO" id="GO:0031625">
    <property type="term" value="F:ubiquitin protein ligase binding"/>
    <property type="evidence" value="ECO:0000353"/>
    <property type="project" value="SGD"/>
</dbReference>
<dbReference type="GO" id="GO:0070086">
    <property type="term" value="P:ubiquitin-dependent endocytosis"/>
    <property type="evidence" value="ECO:0000247"/>
    <property type="project" value="SGD"/>
</dbReference>
<dbReference type="Gene3D" id="2.60.40.640">
    <property type="match status" value="1"/>
</dbReference>
<dbReference type="InterPro" id="IPR014752">
    <property type="entry name" value="Arrestin-like_C"/>
</dbReference>
<dbReference type="InterPro" id="IPR011022">
    <property type="entry name" value="Arrestin_C-like"/>
</dbReference>
<dbReference type="InterPro" id="IPR050357">
    <property type="entry name" value="Arrestin_domain-protein"/>
</dbReference>
<dbReference type="PANTHER" id="PTHR11188">
    <property type="entry name" value="ARRESTIN DOMAIN CONTAINING PROTEIN"/>
    <property type="match status" value="1"/>
</dbReference>
<dbReference type="PANTHER" id="PTHR11188:SF62">
    <property type="entry name" value="ARRESTIN-RELATED TRAFFICKING ADAPTER 5"/>
    <property type="match status" value="1"/>
</dbReference>
<dbReference type="Pfam" id="PF02752">
    <property type="entry name" value="Arrestin_C"/>
    <property type="match status" value="1"/>
</dbReference>
<dbReference type="SMART" id="SM01017">
    <property type="entry name" value="Arrestin_C"/>
    <property type="match status" value="1"/>
</dbReference>
<reference key="1">
    <citation type="journal article" date="1997" name="Nature">
        <title>The nucleotide sequence of Saccharomyces cerevisiae chromosome VII.</title>
        <authorList>
            <person name="Tettelin H."/>
            <person name="Agostoni-Carbone M.L."/>
            <person name="Albermann K."/>
            <person name="Albers M."/>
            <person name="Arroyo J."/>
            <person name="Backes U."/>
            <person name="Barreiros T."/>
            <person name="Bertani I."/>
            <person name="Bjourson A.J."/>
            <person name="Brueckner M."/>
            <person name="Bruschi C.V."/>
            <person name="Carignani G."/>
            <person name="Castagnoli L."/>
            <person name="Cerdan E."/>
            <person name="Clemente M.L."/>
            <person name="Coblenz A."/>
            <person name="Coglievina M."/>
            <person name="Coissac E."/>
            <person name="Defoor E."/>
            <person name="Del Bino S."/>
            <person name="Delius H."/>
            <person name="Delneri D."/>
            <person name="de Wergifosse P."/>
            <person name="Dujon B."/>
            <person name="Durand P."/>
            <person name="Entian K.-D."/>
            <person name="Eraso P."/>
            <person name="Escribano V."/>
            <person name="Fabiani L."/>
            <person name="Fartmann B."/>
            <person name="Feroli F."/>
            <person name="Feuermann M."/>
            <person name="Frontali L."/>
            <person name="Garcia-Gonzalez M."/>
            <person name="Garcia-Saez M.I."/>
            <person name="Goffeau A."/>
            <person name="Guerreiro P."/>
            <person name="Hani J."/>
            <person name="Hansen M."/>
            <person name="Hebling U."/>
            <person name="Hernandez K."/>
            <person name="Heumann K."/>
            <person name="Hilger F."/>
            <person name="Hofmann B."/>
            <person name="Indge K.J."/>
            <person name="James C.M."/>
            <person name="Klima R."/>
            <person name="Koetter P."/>
            <person name="Kramer B."/>
            <person name="Kramer W."/>
            <person name="Lauquin G."/>
            <person name="Leuther H."/>
            <person name="Louis E.J."/>
            <person name="Maillier E."/>
            <person name="Marconi A."/>
            <person name="Martegani E."/>
            <person name="Mazon M.J."/>
            <person name="Mazzoni C."/>
            <person name="McReynolds A.D.K."/>
            <person name="Melchioretto P."/>
            <person name="Mewes H.-W."/>
            <person name="Minenkova O."/>
            <person name="Mueller-Auer S."/>
            <person name="Nawrocki A."/>
            <person name="Netter P."/>
            <person name="Neu R."/>
            <person name="Nombela C."/>
            <person name="Oliver S.G."/>
            <person name="Panzeri L."/>
            <person name="Paoluzi S."/>
            <person name="Plevani P."/>
            <person name="Portetelle D."/>
            <person name="Portillo F."/>
            <person name="Potier S."/>
            <person name="Purnelle B."/>
            <person name="Rieger M."/>
            <person name="Riles L."/>
            <person name="Rinaldi T."/>
            <person name="Robben J."/>
            <person name="Rodrigues-Pousada C."/>
            <person name="Rodriguez-Belmonte E."/>
            <person name="Rodriguez-Torres A.M."/>
            <person name="Rose M."/>
            <person name="Ruzzi M."/>
            <person name="Saliola M."/>
            <person name="Sanchez-Perez M."/>
            <person name="Schaefer B."/>
            <person name="Schaefer M."/>
            <person name="Scharfe M."/>
            <person name="Schmidheini T."/>
            <person name="Schreer A."/>
            <person name="Skala J."/>
            <person name="Souciet J.-L."/>
            <person name="Steensma H.Y."/>
            <person name="Talla E."/>
            <person name="Thierry A."/>
            <person name="Vandenbol M."/>
            <person name="van der Aart Q.J.M."/>
            <person name="Van Dyck L."/>
            <person name="Vanoni M."/>
            <person name="Verhasselt P."/>
            <person name="Voet M."/>
            <person name="Volckaert G."/>
            <person name="Wambutt R."/>
            <person name="Watson M.D."/>
            <person name="Weber N."/>
            <person name="Wedler E."/>
            <person name="Wedler H."/>
            <person name="Wipfli P."/>
            <person name="Wolf K."/>
            <person name="Wright L.F."/>
            <person name="Zaccaria P."/>
            <person name="Zimmermann M."/>
            <person name="Zollner A."/>
            <person name="Kleine K."/>
        </authorList>
    </citation>
    <scope>NUCLEOTIDE SEQUENCE [LARGE SCALE GENOMIC DNA]</scope>
    <source>
        <strain>ATCC 204508 / S288c</strain>
    </source>
</reference>
<reference key="2">
    <citation type="journal article" date="2014" name="G3 (Bethesda)">
        <title>The reference genome sequence of Saccharomyces cerevisiae: Then and now.</title>
        <authorList>
            <person name="Engel S.R."/>
            <person name="Dietrich F.S."/>
            <person name="Fisk D.G."/>
            <person name="Binkley G."/>
            <person name="Balakrishnan R."/>
            <person name="Costanzo M.C."/>
            <person name="Dwight S.S."/>
            <person name="Hitz B.C."/>
            <person name="Karra K."/>
            <person name="Nash R.S."/>
            <person name="Weng S."/>
            <person name="Wong E.D."/>
            <person name="Lloyd P."/>
            <person name="Skrzypek M.S."/>
            <person name="Miyasato S.R."/>
            <person name="Simison M."/>
            <person name="Cherry J.M."/>
        </authorList>
    </citation>
    <scope>GENOME REANNOTATION</scope>
    <source>
        <strain>ATCC 204508 / S288c</strain>
    </source>
</reference>
<reference key="3">
    <citation type="journal article" date="2003" name="Nature">
        <title>Global analysis of protein expression in yeast.</title>
        <authorList>
            <person name="Ghaemmaghami S."/>
            <person name="Huh W.-K."/>
            <person name="Bower K."/>
            <person name="Howson R.W."/>
            <person name="Belle A."/>
            <person name="Dephoure N."/>
            <person name="O'Shea E.K."/>
            <person name="Weissman J.S."/>
        </authorList>
    </citation>
    <scope>LEVEL OF PROTEIN EXPRESSION [LARGE SCALE ANALYSIS]</scope>
</reference>
<reference key="4">
    <citation type="journal article" date="2007" name="Mol. Syst. Biol.">
        <title>Ubiquitination screen using protein microarrays for comprehensive identification of Rsp5 substrates in yeast.</title>
        <authorList>
            <person name="Gupta R."/>
            <person name="Kus B."/>
            <person name="Fladd C."/>
            <person name="Wasmuth J."/>
            <person name="Tonikian R."/>
            <person name="Sidhu S."/>
            <person name="Krogan N.J."/>
            <person name="Parkinson J."/>
            <person name="Rotin D."/>
        </authorList>
    </citation>
    <scope>INTERACTION WITH RSP5</scope>
    <scope>UBIQUITINATION BY RSP5</scope>
</reference>
<reference key="5">
    <citation type="journal article" date="2008" name="Cell">
        <title>Arrestin-related ubiquitin-ligase adaptors regulate endocytosis and protein turnover at the cell surface.</title>
        <authorList>
            <person name="Lin C.H."/>
            <person name="MacGurn J.A."/>
            <person name="Chu T."/>
            <person name="Stefan C.J."/>
            <person name="Emr S.D."/>
        </authorList>
    </citation>
    <scope>INTERACTION WITH RPS5</scope>
    <scope>FUNCTION</scope>
</reference>
<reference key="6">
    <citation type="journal article" date="2008" name="Mol. Cell. Proteomics">
        <title>A multidimensional chromatography technology for in-depth phosphoproteome analysis.</title>
        <authorList>
            <person name="Albuquerque C.P."/>
            <person name="Smolka M.B."/>
            <person name="Payne S.H."/>
            <person name="Bafna V."/>
            <person name="Eng J."/>
            <person name="Zhou H."/>
        </authorList>
    </citation>
    <scope>IDENTIFICATION BY MASS SPECTROMETRY [LARGE SCALE ANALYSIS]</scope>
</reference>
<reference key="7">
    <citation type="journal article" date="2008" name="Mol. Cell. Proteomics">
        <title>Functional dissection of a HECT ubiquitin E3 ligase.</title>
        <authorList>
            <person name="Lu J."/>
            <person name="Lin Y."/>
            <person name="Qian J."/>
            <person name="Tao S."/>
            <person name="Zhu J."/>
            <person name="Pickart C."/>
            <person name="Zhu H."/>
        </authorList>
    </citation>
    <scope>UBIQUITINATION BY RSP5</scope>
</reference>
<reference key="8">
    <citation type="journal article" date="2009" name="Science">
        <title>Global analysis of Cdk1 substrate phosphorylation sites provides insights into evolution.</title>
        <authorList>
            <person name="Holt L.J."/>
            <person name="Tuch B.B."/>
            <person name="Villen J."/>
            <person name="Johnson A.D."/>
            <person name="Gygi S.P."/>
            <person name="Morgan D.O."/>
        </authorList>
    </citation>
    <scope>IDENTIFICATION BY MASS SPECTROMETRY [LARGE SCALE ANALYSIS]</scope>
</reference>
<reference key="9">
    <citation type="journal article" date="2012" name="Proteomics">
        <title>Sites of ubiquitin attachment in Saccharomyces cerevisiae.</title>
        <authorList>
            <person name="Starita L.M."/>
            <person name="Lo R.S."/>
            <person name="Eng J.K."/>
            <person name="von Haller P.D."/>
            <person name="Fields S."/>
        </authorList>
    </citation>
    <scope>UBIQUITINATION [LARGE SCALE ANALYSIS] AT LYS-364</scope>
    <scope>IDENTIFICATION BY MASS SPECTROMETRY [LARGE SCALE ANALYSIS]</scope>
</reference>